<organism>
    <name type="scientific">Chara vulgaris</name>
    <name type="common">Common stonewort</name>
    <dbReference type="NCBI Taxonomy" id="55564"/>
    <lineage>
        <taxon>Eukaryota</taxon>
        <taxon>Viridiplantae</taxon>
        <taxon>Streptophyta</taxon>
        <taxon>Charophyceae</taxon>
        <taxon>Charales</taxon>
        <taxon>Characeae</taxon>
        <taxon>Chara</taxon>
    </lineage>
</organism>
<geneLocation type="chloroplast"/>
<dbReference type="EMBL" id="DQ229107">
    <property type="protein sequence ID" value="ABA61954.1"/>
    <property type="molecule type" value="Genomic_DNA"/>
</dbReference>
<dbReference type="RefSeq" id="YP_635773.1">
    <property type="nucleotide sequence ID" value="NC_008097.1"/>
</dbReference>
<dbReference type="SMR" id="Q1ACH4"/>
<dbReference type="GeneID" id="4100320"/>
<dbReference type="GO" id="GO:0009535">
    <property type="term" value="C:chloroplast thylakoid membrane"/>
    <property type="evidence" value="ECO:0007669"/>
    <property type="project" value="UniProtKB-SubCell"/>
</dbReference>
<dbReference type="GO" id="GO:0009539">
    <property type="term" value="C:photosystem II reaction center"/>
    <property type="evidence" value="ECO:0007669"/>
    <property type="project" value="InterPro"/>
</dbReference>
<dbReference type="GO" id="GO:0015979">
    <property type="term" value="P:photosynthesis"/>
    <property type="evidence" value="ECO:0007669"/>
    <property type="project" value="UniProtKB-UniRule"/>
</dbReference>
<dbReference type="HAMAP" id="MF_00808">
    <property type="entry name" value="PSII_PsbT"/>
    <property type="match status" value="1"/>
</dbReference>
<dbReference type="InterPro" id="IPR001743">
    <property type="entry name" value="PSII_PsbT"/>
</dbReference>
<dbReference type="InterPro" id="IPR037268">
    <property type="entry name" value="PSII_PsbT_sf"/>
</dbReference>
<dbReference type="PANTHER" id="PTHR36411">
    <property type="match status" value="1"/>
</dbReference>
<dbReference type="PANTHER" id="PTHR36411:SF2">
    <property type="entry name" value="PHOTOSYSTEM II REACTION CENTER PROTEIN T"/>
    <property type="match status" value="1"/>
</dbReference>
<dbReference type="Pfam" id="PF01405">
    <property type="entry name" value="PsbT"/>
    <property type="match status" value="1"/>
</dbReference>
<dbReference type="SUPFAM" id="SSF161029">
    <property type="entry name" value="Photosystem II reaction center protein T, PsbT"/>
    <property type="match status" value="1"/>
</dbReference>
<protein>
    <recommendedName>
        <fullName evidence="1">Photosystem II reaction center protein T</fullName>
        <shortName evidence="1">PSII-T</shortName>
    </recommendedName>
</protein>
<proteinExistence type="inferred from homology"/>
<sequence>MEALVYTFLLVGTLGIIFFAIFFREPPRIIAKTKK</sequence>
<gene>
    <name evidence="1" type="primary">psbT</name>
</gene>
<comment type="function">
    <text evidence="1">Found at the monomer-monomer interface of the photosystem II (PS II) dimer, plays a role in assembly and dimerization of PSII. PSII is a light-driven water plastoquinone oxidoreductase, using light energy to abstract electrons from H(2)O, generating a proton gradient subsequently used for ATP formation.</text>
</comment>
<comment type="subunit">
    <text evidence="1">PSII is composed of 1 copy each of membrane proteins PsbA, PsbB, PsbC, PsbD, PsbE, PsbF, PsbH, PsbI, PsbJ, PsbK, PsbL, PsbM, PsbT, PsbY, PsbZ, Psb30/Ycf12, at least 3 peripheral proteins of the oxygen-evolving complex and a large number of cofactors. It forms dimeric complexes.</text>
</comment>
<comment type="subcellular location">
    <subcellularLocation>
        <location evidence="1">Plastid</location>
        <location evidence="1">Chloroplast thylakoid membrane</location>
        <topology evidence="1">Single-pass membrane protein</topology>
    </subcellularLocation>
</comment>
<comment type="similarity">
    <text evidence="1">Belongs to the PsbT family.</text>
</comment>
<feature type="chain" id="PRO_0000276288" description="Photosystem II reaction center protein T">
    <location>
        <begin position="1"/>
        <end position="35"/>
    </location>
</feature>
<feature type="transmembrane region" description="Helical" evidence="1">
    <location>
        <begin position="3"/>
        <end position="23"/>
    </location>
</feature>
<accession>Q1ACH4</accession>
<name>PSBT_CHAVU</name>
<evidence type="ECO:0000255" key="1">
    <source>
        <dbReference type="HAMAP-Rule" id="MF_00808"/>
    </source>
</evidence>
<reference key="1">
    <citation type="journal article" date="2006" name="Mol. Biol. Evol.">
        <title>The chloroplast genome sequence of Chara vulgaris sheds new light into the closest green algal relatives of land plants.</title>
        <authorList>
            <person name="Turmel M."/>
            <person name="Otis C."/>
            <person name="Lemieux C."/>
        </authorList>
    </citation>
    <scope>NUCLEOTIDE SEQUENCE [LARGE SCALE GENOMIC DNA]</scope>
</reference>
<keyword id="KW-0150">Chloroplast</keyword>
<keyword id="KW-0472">Membrane</keyword>
<keyword id="KW-0602">Photosynthesis</keyword>
<keyword id="KW-0604">Photosystem II</keyword>
<keyword id="KW-0934">Plastid</keyword>
<keyword id="KW-0793">Thylakoid</keyword>
<keyword id="KW-0812">Transmembrane</keyword>
<keyword id="KW-1133">Transmembrane helix</keyword>